<gene>
    <name evidence="1" type="primary">chlN</name>
</gene>
<organism>
    <name type="scientific">Chlorokybus atmophyticus</name>
    <name type="common">Soil alga</name>
    <dbReference type="NCBI Taxonomy" id="3144"/>
    <lineage>
        <taxon>Eukaryota</taxon>
        <taxon>Viridiplantae</taxon>
        <taxon>Streptophyta</taxon>
        <taxon>Chlorokybophyceae</taxon>
        <taxon>Chlorokybales</taxon>
        <taxon>Chlorokybaceae</taxon>
        <taxon>Chlorokybus</taxon>
    </lineage>
</organism>
<protein>
    <recommendedName>
        <fullName evidence="1">Light-independent protochlorophyllide reductase subunit N</fullName>
        <shortName evidence="1">DPOR subunit N</shortName>
        <shortName evidence="1">LI-POR subunit N</shortName>
        <ecNumber evidence="1">1.3.7.7</ecNumber>
    </recommendedName>
</protein>
<name>CHLN_CHLAT</name>
<keyword id="KW-0004">4Fe-4S</keyword>
<keyword id="KW-0067">ATP-binding</keyword>
<keyword id="KW-0149">Chlorophyll biosynthesis</keyword>
<keyword id="KW-0150">Chloroplast</keyword>
<keyword id="KW-0408">Iron</keyword>
<keyword id="KW-0411">Iron-sulfur</keyword>
<keyword id="KW-0479">Metal-binding</keyword>
<keyword id="KW-0547">Nucleotide-binding</keyword>
<keyword id="KW-0560">Oxidoreductase</keyword>
<keyword id="KW-0602">Photosynthesis</keyword>
<keyword id="KW-0934">Plastid</keyword>
<geneLocation type="chloroplast"/>
<evidence type="ECO:0000255" key="1">
    <source>
        <dbReference type="HAMAP-Rule" id="MF_00352"/>
    </source>
</evidence>
<sequence length="478" mass="53597">MSAMTSDTLTFECETGNYHTFCPISCVAWLYQKIEDSFFLVIGTKTCGYFLQNALGVMIFAEPRYAMAELEEGDISAQLNDYQELKRLCTQIKQDRNPSVIVWIGTCTTEIIKMDLEGMAPKIEQEIKIPIVVARANGLDYAFTQGEDTVLAAMVERCPGETKLSEQSQDKGSSKQNFSSTKGLFSILNFNKKAAADTQPQEAEDYIDHPPLVLFGSLPGPVVSQLTLELKRQKIKVSGWLPSQRYTDLPAVGKGVYVCGVNPFLSRTATILMRRRKCKLIGAPFPIGPDGTRAWVEKICSVFNVEPIGLAERENKIWEGLEDYLQLVRGKSVFFMGDNLLEVSLARFLTRCGMIVYEIGIPYMDKRYQAAELALLEKTCQEMGVPMPRIVEKPDNYNQIQRIRELQPDLAITGMAHANPLEARGISTKWSVEFTFAQIHGFTNARDILELVTRPLRRNNSLEGLGWTSLVKEGVLSN</sequence>
<feature type="chain" id="PRO_0000324035" description="Light-independent protochlorophyllide reductase subunit N">
    <location>
        <begin position="1"/>
        <end position="478"/>
    </location>
</feature>
<feature type="binding site" evidence="1">
    <location>
        <position position="22"/>
    </location>
    <ligand>
        <name>[4Fe-4S] cluster</name>
        <dbReference type="ChEBI" id="CHEBI:49883"/>
        <note>ligand shared with heterodimeric partner</note>
    </ligand>
</feature>
<feature type="binding site" evidence="1">
    <location>
        <position position="47"/>
    </location>
    <ligand>
        <name>[4Fe-4S] cluster</name>
        <dbReference type="ChEBI" id="CHEBI:49883"/>
        <note>ligand shared with heterodimeric partner</note>
    </ligand>
</feature>
<feature type="binding site" evidence="1">
    <location>
        <position position="107"/>
    </location>
    <ligand>
        <name>[4Fe-4S] cluster</name>
        <dbReference type="ChEBI" id="CHEBI:49883"/>
        <note>ligand shared with heterodimeric partner</note>
    </ligand>
</feature>
<accession>Q19V53</accession>
<comment type="function">
    <text evidence="1">Component of the dark-operative protochlorophyllide reductase (DPOR) that uses Mg-ATP and reduced ferredoxin to reduce ring D of protochlorophyllide (Pchlide) to form chlorophyllide a (Chlide). This reaction is light-independent. The NB-protein (ChlN-ChlB) is the catalytic component of the complex.</text>
</comment>
<comment type="catalytic activity">
    <reaction evidence="1">
        <text>chlorophyllide a + oxidized 2[4Fe-4S]-[ferredoxin] + 2 ADP + 2 phosphate = protochlorophyllide a + reduced 2[4Fe-4S]-[ferredoxin] + 2 ATP + 2 H2O</text>
        <dbReference type="Rhea" id="RHEA:28202"/>
        <dbReference type="Rhea" id="RHEA-COMP:10002"/>
        <dbReference type="Rhea" id="RHEA-COMP:10004"/>
        <dbReference type="ChEBI" id="CHEBI:15377"/>
        <dbReference type="ChEBI" id="CHEBI:30616"/>
        <dbReference type="ChEBI" id="CHEBI:33722"/>
        <dbReference type="ChEBI" id="CHEBI:33723"/>
        <dbReference type="ChEBI" id="CHEBI:43474"/>
        <dbReference type="ChEBI" id="CHEBI:83348"/>
        <dbReference type="ChEBI" id="CHEBI:83350"/>
        <dbReference type="ChEBI" id="CHEBI:456216"/>
        <dbReference type="EC" id="1.3.7.7"/>
    </reaction>
</comment>
<comment type="cofactor">
    <cofactor evidence="1">
        <name>[4Fe-4S] cluster</name>
        <dbReference type="ChEBI" id="CHEBI:49883"/>
    </cofactor>
    <text evidence="1">Binds 1 [4Fe-4S] cluster per heterodimer. The cluster is bound at the heterodimer interface by residues from both subunits.</text>
</comment>
<comment type="pathway">
    <text evidence="1">Porphyrin-containing compound metabolism; chlorophyll biosynthesis (light-independent).</text>
</comment>
<comment type="subunit">
    <text evidence="1">Protochlorophyllide reductase is composed of three subunits; ChlL, ChlN and ChlB. Forms a heterotetramer of two ChlB and two ChlN subunits.</text>
</comment>
<comment type="subcellular location">
    <subcellularLocation>
        <location>Plastid</location>
        <location>Chloroplast</location>
    </subcellularLocation>
</comment>
<comment type="similarity">
    <text evidence="1">Belongs to the BchN/ChlN family.</text>
</comment>
<proteinExistence type="inferred from homology"/>
<reference key="1">
    <citation type="journal article" date="2007" name="BMC Biol.">
        <title>A clade uniting the green algae Mesostigma viride and Chlorokybus atmophyticus represents the deepest branch of the Streptophyta in chloroplast genome-based phylogenies.</title>
        <authorList>
            <person name="Lemieux C."/>
            <person name="Otis C."/>
            <person name="Turmel M."/>
        </authorList>
    </citation>
    <scope>NUCLEOTIDE SEQUENCE [LARGE SCALE GENOMIC DNA]</scope>
    <source>
        <strain>SAG 48.80</strain>
    </source>
</reference>
<dbReference type="EC" id="1.3.7.7" evidence="1"/>
<dbReference type="EMBL" id="DQ422812">
    <property type="protein sequence ID" value="ABD62180.2"/>
    <property type="molecule type" value="Genomic_DNA"/>
</dbReference>
<dbReference type="RefSeq" id="YP_001019172.1">
    <property type="nucleotide sequence ID" value="NC_008822.1"/>
</dbReference>
<dbReference type="SMR" id="Q19V53"/>
<dbReference type="GeneID" id="4783259"/>
<dbReference type="UniPathway" id="UPA00670"/>
<dbReference type="GO" id="GO:0009507">
    <property type="term" value="C:chloroplast"/>
    <property type="evidence" value="ECO:0007669"/>
    <property type="project" value="UniProtKB-SubCell"/>
</dbReference>
<dbReference type="GO" id="GO:0051539">
    <property type="term" value="F:4 iron, 4 sulfur cluster binding"/>
    <property type="evidence" value="ECO:0007669"/>
    <property type="project" value="UniProtKB-UniRule"/>
</dbReference>
<dbReference type="GO" id="GO:0005524">
    <property type="term" value="F:ATP binding"/>
    <property type="evidence" value="ECO:0007669"/>
    <property type="project" value="UniProtKB-UniRule"/>
</dbReference>
<dbReference type="GO" id="GO:0046872">
    <property type="term" value="F:metal ion binding"/>
    <property type="evidence" value="ECO:0007669"/>
    <property type="project" value="UniProtKB-KW"/>
</dbReference>
<dbReference type="GO" id="GO:0016730">
    <property type="term" value="F:oxidoreductase activity, acting on iron-sulfur proteins as donors"/>
    <property type="evidence" value="ECO:0007669"/>
    <property type="project" value="InterPro"/>
</dbReference>
<dbReference type="GO" id="GO:0016636">
    <property type="term" value="F:oxidoreductase activity, acting on the CH-CH group of donors, iron-sulfur protein as acceptor"/>
    <property type="evidence" value="ECO:0007669"/>
    <property type="project" value="UniProtKB-UniRule"/>
</dbReference>
<dbReference type="GO" id="GO:0036068">
    <property type="term" value="P:light-independent chlorophyll biosynthetic process"/>
    <property type="evidence" value="ECO:0007669"/>
    <property type="project" value="UniProtKB-UniRule"/>
</dbReference>
<dbReference type="GO" id="GO:0019685">
    <property type="term" value="P:photosynthesis, dark reaction"/>
    <property type="evidence" value="ECO:0007669"/>
    <property type="project" value="InterPro"/>
</dbReference>
<dbReference type="CDD" id="cd01979">
    <property type="entry name" value="Pchlide_reductase_N"/>
    <property type="match status" value="1"/>
</dbReference>
<dbReference type="Gene3D" id="3.40.50.1980">
    <property type="entry name" value="Nitrogenase molybdenum iron protein domain"/>
    <property type="match status" value="2"/>
</dbReference>
<dbReference type="HAMAP" id="MF_00352">
    <property type="entry name" value="ChlN_BchN"/>
    <property type="match status" value="1"/>
</dbReference>
<dbReference type="InterPro" id="IPR050293">
    <property type="entry name" value="LIPOR_BchN/ChlN"/>
</dbReference>
<dbReference type="InterPro" id="IPR000510">
    <property type="entry name" value="Nase/OxRdtase_comp1"/>
</dbReference>
<dbReference type="InterPro" id="IPR005970">
    <property type="entry name" value="Protochl_reductN"/>
</dbReference>
<dbReference type="NCBIfam" id="TIGR01279">
    <property type="entry name" value="DPOR_bchN"/>
    <property type="match status" value="1"/>
</dbReference>
<dbReference type="NCBIfam" id="NF002768">
    <property type="entry name" value="PRK02842.1"/>
    <property type="match status" value="1"/>
</dbReference>
<dbReference type="PANTHER" id="PTHR39429">
    <property type="entry name" value="LIGHT-INDEPENDENT PROTOCHLOROPHYLLIDE REDUCTASE SUBUNIT N"/>
    <property type="match status" value="1"/>
</dbReference>
<dbReference type="PANTHER" id="PTHR39429:SF3">
    <property type="entry name" value="LIGHT-INDEPENDENT PROTOCHLOROPHYLLIDE REDUCTASE SUBUNIT N"/>
    <property type="match status" value="1"/>
</dbReference>
<dbReference type="Pfam" id="PF00148">
    <property type="entry name" value="Oxidored_nitro"/>
    <property type="match status" value="1"/>
</dbReference>
<dbReference type="PIRSF" id="PIRSF000162">
    <property type="entry name" value="P_chlorophyll_rd"/>
    <property type="match status" value="1"/>
</dbReference>
<dbReference type="SUPFAM" id="SSF53807">
    <property type="entry name" value="Helical backbone' metal receptor"/>
    <property type="match status" value="1"/>
</dbReference>